<keyword id="KW-0001">2Fe-2S</keyword>
<keyword id="KW-0010">Activator</keyword>
<keyword id="KW-0238">DNA-binding</keyword>
<keyword id="KW-0408">Iron</keyword>
<keyword id="KW-0411">Iron-sulfur</keyword>
<keyword id="KW-0479">Metal-binding</keyword>
<keyword id="KW-0678">Repressor</keyword>
<keyword id="KW-0804">Transcription</keyword>
<keyword id="KW-0805">Transcription regulation</keyword>
<name>ISCR_KLEP3</name>
<sequence>MRLTSKGRYAVTAMLDVALNSETGPVPLADISERQGISLSYLEQLFSRLRKNGLVSSVRGPGGGYLLGKDASSIAVGEVISAVDESVDATRCQGKGGCQGGDKCLTHALWRDLSERLTGFLNNITLGELVNNQEILDVSGRQHQHETQRNARTQDAIDVKLRA</sequence>
<feature type="chain" id="PRO_1000138103" description="HTH-type transcriptional regulator IscR">
    <location>
        <begin position="1"/>
        <end position="163"/>
    </location>
</feature>
<feature type="domain" description="HTH rrf2-type" evidence="1">
    <location>
        <begin position="2"/>
        <end position="131"/>
    </location>
</feature>
<feature type="DNA-binding region" description="H-T-H motif" evidence="1">
    <location>
        <begin position="28"/>
        <end position="51"/>
    </location>
</feature>
<feature type="binding site" evidence="1">
    <location>
        <position position="92"/>
    </location>
    <ligand>
        <name>[2Fe-2S] cluster</name>
        <dbReference type="ChEBI" id="CHEBI:190135"/>
    </ligand>
</feature>
<feature type="binding site" evidence="1">
    <location>
        <position position="98"/>
    </location>
    <ligand>
        <name>[2Fe-2S] cluster</name>
        <dbReference type="ChEBI" id="CHEBI:190135"/>
    </ligand>
</feature>
<feature type="binding site" evidence="1">
    <location>
        <position position="104"/>
    </location>
    <ligand>
        <name>[2Fe-2S] cluster</name>
        <dbReference type="ChEBI" id="CHEBI:190135"/>
    </ligand>
</feature>
<reference key="1">
    <citation type="journal article" date="2008" name="PLoS Genet.">
        <title>Complete genome sequence of the N2-fixing broad host range endophyte Klebsiella pneumoniae 342 and virulence predictions verified in mice.</title>
        <authorList>
            <person name="Fouts D.E."/>
            <person name="Tyler H.L."/>
            <person name="DeBoy R.T."/>
            <person name="Daugherty S."/>
            <person name="Ren Q."/>
            <person name="Badger J.H."/>
            <person name="Durkin A.S."/>
            <person name="Huot H."/>
            <person name="Shrivastava S."/>
            <person name="Kothari S."/>
            <person name="Dodson R.J."/>
            <person name="Mohamoud Y."/>
            <person name="Khouri H."/>
            <person name="Roesch L.F.W."/>
            <person name="Krogfelt K.A."/>
            <person name="Struve C."/>
            <person name="Triplett E.W."/>
            <person name="Methe B.A."/>
        </authorList>
    </citation>
    <scope>NUCLEOTIDE SEQUENCE [LARGE SCALE GENOMIC DNA]</scope>
    <source>
        <strain>342</strain>
    </source>
</reference>
<dbReference type="EMBL" id="CP000964">
    <property type="protein sequence ID" value="ACI09948.1"/>
    <property type="molecule type" value="Genomic_DNA"/>
</dbReference>
<dbReference type="SMR" id="B5XNJ6"/>
<dbReference type="KEGG" id="kpe:KPK_1256"/>
<dbReference type="HOGENOM" id="CLU_107144_0_0_6"/>
<dbReference type="Proteomes" id="UP000001734">
    <property type="component" value="Chromosome"/>
</dbReference>
<dbReference type="GO" id="GO:0005829">
    <property type="term" value="C:cytosol"/>
    <property type="evidence" value="ECO:0007669"/>
    <property type="project" value="TreeGrafter"/>
</dbReference>
<dbReference type="GO" id="GO:0051537">
    <property type="term" value="F:2 iron, 2 sulfur cluster binding"/>
    <property type="evidence" value="ECO:0007669"/>
    <property type="project" value="UniProtKB-KW"/>
</dbReference>
<dbReference type="GO" id="GO:0003700">
    <property type="term" value="F:DNA-binding transcription factor activity"/>
    <property type="evidence" value="ECO:0007669"/>
    <property type="project" value="UniProtKB-UniRule"/>
</dbReference>
<dbReference type="GO" id="GO:0003690">
    <property type="term" value="F:double-stranded DNA binding"/>
    <property type="evidence" value="ECO:0007669"/>
    <property type="project" value="UniProtKB-UniRule"/>
</dbReference>
<dbReference type="GO" id="GO:0005506">
    <property type="term" value="F:iron ion binding"/>
    <property type="evidence" value="ECO:0007669"/>
    <property type="project" value="UniProtKB-UniRule"/>
</dbReference>
<dbReference type="FunFam" id="1.10.10.10:FF:000026">
    <property type="entry name" value="HTH-type transcriptional regulator IscR"/>
    <property type="match status" value="1"/>
</dbReference>
<dbReference type="Gene3D" id="1.10.10.10">
    <property type="entry name" value="Winged helix-like DNA-binding domain superfamily/Winged helix DNA-binding domain"/>
    <property type="match status" value="1"/>
</dbReference>
<dbReference type="HAMAP" id="MF_01176">
    <property type="entry name" value="HTH_type_IscR"/>
    <property type="match status" value="1"/>
</dbReference>
<dbReference type="InterPro" id="IPR010242">
    <property type="entry name" value="TF_HTH_IscR"/>
</dbReference>
<dbReference type="InterPro" id="IPR030489">
    <property type="entry name" value="TR_Rrf2-type_CS"/>
</dbReference>
<dbReference type="InterPro" id="IPR000944">
    <property type="entry name" value="Tscrpt_reg_Rrf2"/>
</dbReference>
<dbReference type="InterPro" id="IPR036388">
    <property type="entry name" value="WH-like_DNA-bd_sf"/>
</dbReference>
<dbReference type="InterPro" id="IPR036390">
    <property type="entry name" value="WH_DNA-bd_sf"/>
</dbReference>
<dbReference type="NCBIfam" id="TIGR02010">
    <property type="entry name" value="IscR"/>
    <property type="match status" value="1"/>
</dbReference>
<dbReference type="NCBIfam" id="NF008110">
    <property type="entry name" value="PRK10857.1"/>
    <property type="match status" value="1"/>
</dbReference>
<dbReference type="NCBIfam" id="TIGR00738">
    <property type="entry name" value="rrf2_super"/>
    <property type="match status" value="1"/>
</dbReference>
<dbReference type="PANTHER" id="PTHR33221:SF5">
    <property type="entry name" value="HTH-TYPE TRANSCRIPTIONAL REGULATOR ISCR"/>
    <property type="match status" value="1"/>
</dbReference>
<dbReference type="PANTHER" id="PTHR33221">
    <property type="entry name" value="WINGED HELIX-TURN-HELIX TRANSCRIPTIONAL REGULATOR, RRF2 FAMILY"/>
    <property type="match status" value="1"/>
</dbReference>
<dbReference type="Pfam" id="PF02082">
    <property type="entry name" value="Rrf2"/>
    <property type="match status" value="1"/>
</dbReference>
<dbReference type="SUPFAM" id="SSF46785">
    <property type="entry name" value="Winged helix' DNA-binding domain"/>
    <property type="match status" value="1"/>
</dbReference>
<dbReference type="PROSITE" id="PS01332">
    <property type="entry name" value="HTH_RRF2_1"/>
    <property type="match status" value="1"/>
</dbReference>
<dbReference type="PROSITE" id="PS51197">
    <property type="entry name" value="HTH_RRF2_2"/>
    <property type="match status" value="1"/>
</dbReference>
<evidence type="ECO:0000255" key="1">
    <source>
        <dbReference type="HAMAP-Rule" id="MF_01176"/>
    </source>
</evidence>
<protein>
    <recommendedName>
        <fullName evidence="1">HTH-type transcriptional regulator IscR</fullName>
    </recommendedName>
</protein>
<organism>
    <name type="scientific">Klebsiella pneumoniae (strain 342)</name>
    <dbReference type="NCBI Taxonomy" id="507522"/>
    <lineage>
        <taxon>Bacteria</taxon>
        <taxon>Pseudomonadati</taxon>
        <taxon>Pseudomonadota</taxon>
        <taxon>Gammaproteobacteria</taxon>
        <taxon>Enterobacterales</taxon>
        <taxon>Enterobacteriaceae</taxon>
        <taxon>Klebsiella/Raoultella group</taxon>
        <taxon>Klebsiella</taxon>
        <taxon>Klebsiella pneumoniae complex</taxon>
    </lineage>
</organism>
<comment type="function">
    <text evidence="1">Regulates the transcription of several operons and genes involved in the biogenesis of Fe-S clusters and Fe-S-containing proteins.</text>
</comment>
<comment type="cofactor">
    <cofactor evidence="1">
        <name>[2Fe-2S] cluster</name>
        <dbReference type="ChEBI" id="CHEBI:190135"/>
    </cofactor>
    <text evidence="1">Binds 1 [2Fe-2S] cluster.</text>
</comment>
<proteinExistence type="inferred from homology"/>
<gene>
    <name evidence="1" type="primary">iscR</name>
    <name type="ordered locus">KPK_1256</name>
</gene>
<accession>B5XNJ6</accession>